<organism>
    <name type="scientific">Drosophila sechellia</name>
    <name type="common">Fruit fly</name>
    <dbReference type="NCBI Taxonomy" id="7238"/>
    <lineage>
        <taxon>Eukaryota</taxon>
        <taxon>Metazoa</taxon>
        <taxon>Ecdysozoa</taxon>
        <taxon>Arthropoda</taxon>
        <taxon>Hexapoda</taxon>
        <taxon>Insecta</taxon>
        <taxon>Pterygota</taxon>
        <taxon>Neoptera</taxon>
        <taxon>Endopterygota</taxon>
        <taxon>Diptera</taxon>
        <taxon>Brachycera</taxon>
        <taxon>Muscomorpha</taxon>
        <taxon>Ephydroidea</taxon>
        <taxon>Drosophilidae</taxon>
        <taxon>Drosophila</taxon>
        <taxon>Sophophora</taxon>
    </lineage>
</organism>
<sequence>MRKLTSFACGTGAGLAAYYLQRLRDPQTAVQNSWTHSDKPVDPWALWDTNWDCREPRALVRPLRNSQPEEENRYNAELEKAKAKKARHIILVRHGEYLDVGDSDDTHHLTERGRKQAEFTGKRLCELGIKWDKVVASTMMRAQETSDIILKQIDFEKEKVVNCAFLREGAPIPPQPPVGHWKPEASQFLRDGSRIEAGFRRYFHRAYPDQEKESYTLIVGHGNVIRYFVCRALQFPAEGWLRININHASITWLTISPSGNVSIKYLGDSGFMPAELLTNRIPRDVKNVV</sequence>
<gene>
    <name evidence="2" type="primary">Pgam5</name>
    <name type="ORF">GM18947</name>
</gene>
<name>PGAM5_DROSE</name>
<reference evidence="4" key="1">
    <citation type="journal article" date="2007" name="Nature">
        <title>Evolution of genes and genomes on the Drosophila phylogeny.</title>
        <authorList>
            <consortium name="Drosophila 12 genomes consortium"/>
        </authorList>
    </citation>
    <scope>NUCLEOTIDE SEQUENCE [LARGE SCALE GENOMIC DNA]</scope>
    <source>
        <strain evidence="4">Rob3c / Tucson 14021-0248.25</strain>
    </source>
</reference>
<protein>
    <recommendedName>
        <fullName evidence="2">Serine/threonine-protein phosphatase Pgam5, mitochondrial</fullName>
        <ecNumber>3.1.3.16</ecNumber>
    </recommendedName>
    <alternativeName>
        <fullName evidence="2">Phosphoglycerate mutase family member 5 homolog</fullName>
    </alternativeName>
</protein>
<feature type="chain" id="PRO_0000390708" description="Serine/threonine-protein phosphatase Pgam5, mitochondrial">
    <location>
        <begin position="1"/>
        <end position="289"/>
    </location>
</feature>
<feature type="transmembrane region" description="Helical" evidence="3">
    <location>
        <begin position="7"/>
        <end position="23"/>
    </location>
</feature>
<accession>B4I9J6</accession>
<proteinExistence type="inferred from homology"/>
<evidence type="ECO:0000250" key="1"/>
<evidence type="ECO:0000250" key="2">
    <source>
        <dbReference type="UniProtKB" id="O46084"/>
    </source>
</evidence>
<evidence type="ECO:0000255" key="3"/>
<evidence type="ECO:0000312" key="4">
    <source>
        <dbReference type="EMBL" id="EDW43877.1"/>
    </source>
</evidence>
<dbReference type="EC" id="3.1.3.16"/>
<dbReference type="EMBL" id="CH480825">
    <property type="protein sequence ID" value="EDW43877.1"/>
    <property type="molecule type" value="Genomic_DNA"/>
</dbReference>
<dbReference type="SMR" id="B4I9J6"/>
<dbReference type="STRING" id="7238.B4I9J6"/>
<dbReference type="EnsemblMetazoa" id="FBtr0201932">
    <property type="protein sequence ID" value="FBpp0200424"/>
    <property type="gene ID" value="FBgn0173850"/>
</dbReference>
<dbReference type="EnsemblMetazoa" id="XM_002040370.2">
    <property type="protein sequence ID" value="XP_002040406.1"/>
    <property type="gene ID" value="LOC6616040"/>
</dbReference>
<dbReference type="GeneID" id="6616040"/>
<dbReference type="KEGG" id="dse:6616040"/>
<dbReference type="CTD" id="192111"/>
<dbReference type="HOGENOM" id="CLU_063130_0_1_1"/>
<dbReference type="OMA" id="MPMEMIT"/>
<dbReference type="OrthoDB" id="1998at7215"/>
<dbReference type="PhylomeDB" id="B4I9J6"/>
<dbReference type="Proteomes" id="UP000001292">
    <property type="component" value="Unassembled WGS sequence"/>
</dbReference>
<dbReference type="GO" id="GO:0005741">
    <property type="term" value="C:mitochondrial outer membrane"/>
    <property type="evidence" value="ECO:0007669"/>
    <property type="project" value="UniProtKB-SubCell"/>
</dbReference>
<dbReference type="GO" id="GO:0019900">
    <property type="term" value="F:kinase binding"/>
    <property type="evidence" value="ECO:0007669"/>
    <property type="project" value="EnsemblMetazoa"/>
</dbReference>
<dbReference type="GO" id="GO:0004721">
    <property type="term" value="F:phosphoprotein phosphatase activity"/>
    <property type="evidence" value="ECO:0000250"/>
    <property type="project" value="UniProtKB"/>
</dbReference>
<dbReference type="GO" id="GO:0043539">
    <property type="term" value="F:protein serine/threonine kinase activator activity"/>
    <property type="evidence" value="ECO:0007669"/>
    <property type="project" value="EnsemblMetazoa"/>
</dbReference>
<dbReference type="GO" id="GO:0004722">
    <property type="term" value="F:protein serine/threonine phosphatase activity"/>
    <property type="evidence" value="ECO:0007669"/>
    <property type="project" value="UniProtKB-EC"/>
</dbReference>
<dbReference type="GO" id="GO:0090141">
    <property type="term" value="P:positive regulation of mitochondrial fission"/>
    <property type="evidence" value="ECO:0007669"/>
    <property type="project" value="EnsemblMetazoa"/>
</dbReference>
<dbReference type="GO" id="GO:0010636">
    <property type="term" value="P:positive regulation of mitochondrial fusion"/>
    <property type="evidence" value="ECO:0007669"/>
    <property type="project" value="EnsemblMetazoa"/>
</dbReference>
<dbReference type="GO" id="GO:0006470">
    <property type="term" value="P:protein dephosphorylation"/>
    <property type="evidence" value="ECO:0000250"/>
    <property type="project" value="UniProtKB"/>
</dbReference>
<dbReference type="GO" id="GO:0072347">
    <property type="term" value="P:response to anesthetic"/>
    <property type="evidence" value="ECO:0007669"/>
    <property type="project" value="EnsemblMetazoa"/>
</dbReference>
<dbReference type="GO" id="GO:0009408">
    <property type="term" value="P:response to heat"/>
    <property type="evidence" value="ECO:0007669"/>
    <property type="project" value="EnsemblMetazoa"/>
</dbReference>
<dbReference type="CDD" id="cd07067">
    <property type="entry name" value="HP_PGM_like"/>
    <property type="match status" value="1"/>
</dbReference>
<dbReference type="FunFam" id="3.40.50.1240:FF:000009">
    <property type="entry name" value="serine/threonine-protein phosphatase PGAM5, mitochondrial isoform X1"/>
    <property type="match status" value="1"/>
</dbReference>
<dbReference type="Gene3D" id="3.40.50.1240">
    <property type="entry name" value="Phosphoglycerate mutase-like"/>
    <property type="match status" value="1"/>
</dbReference>
<dbReference type="InterPro" id="IPR013078">
    <property type="entry name" value="His_Pase_superF_clade-1"/>
</dbReference>
<dbReference type="InterPro" id="IPR029033">
    <property type="entry name" value="His_PPase_superfam"/>
</dbReference>
<dbReference type="InterPro" id="IPR051021">
    <property type="entry name" value="Mito_Ser/Thr_phosphatase"/>
</dbReference>
<dbReference type="PANTHER" id="PTHR20935">
    <property type="entry name" value="PHOSPHOGLYCERATE MUTASE-RELATED"/>
    <property type="match status" value="1"/>
</dbReference>
<dbReference type="PANTHER" id="PTHR20935:SF0">
    <property type="entry name" value="SERINE_THREONINE-PROTEIN PHOSPHATASE PGAM5, MITOCHONDRIAL"/>
    <property type="match status" value="1"/>
</dbReference>
<dbReference type="Pfam" id="PF00300">
    <property type="entry name" value="His_Phos_1"/>
    <property type="match status" value="2"/>
</dbReference>
<dbReference type="SMART" id="SM00855">
    <property type="entry name" value="PGAM"/>
    <property type="match status" value="1"/>
</dbReference>
<dbReference type="SUPFAM" id="SSF53254">
    <property type="entry name" value="Phosphoglycerate mutase-like"/>
    <property type="match status" value="1"/>
</dbReference>
<keyword id="KW-0378">Hydrolase</keyword>
<keyword id="KW-0472">Membrane</keyword>
<keyword id="KW-0496">Mitochondrion</keyword>
<keyword id="KW-1000">Mitochondrion outer membrane</keyword>
<keyword id="KW-1185">Reference proteome</keyword>
<keyword id="KW-0812">Transmembrane</keyword>
<keyword id="KW-1133">Transmembrane helix</keyword>
<comment type="function">
    <text evidence="2">Displays phosphatase activity for serine/threonine residues, and dephosphorylates and activates Pk92B kinase. Has apparently no phosphoglycerate mutase activity (By similarity).</text>
</comment>
<comment type="catalytic activity">
    <reaction>
        <text>O-phospho-L-seryl-[protein] + H2O = L-seryl-[protein] + phosphate</text>
        <dbReference type="Rhea" id="RHEA:20629"/>
        <dbReference type="Rhea" id="RHEA-COMP:9863"/>
        <dbReference type="Rhea" id="RHEA-COMP:11604"/>
        <dbReference type="ChEBI" id="CHEBI:15377"/>
        <dbReference type="ChEBI" id="CHEBI:29999"/>
        <dbReference type="ChEBI" id="CHEBI:43474"/>
        <dbReference type="ChEBI" id="CHEBI:83421"/>
        <dbReference type="EC" id="3.1.3.16"/>
    </reaction>
</comment>
<comment type="catalytic activity">
    <reaction>
        <text>O-phospho-L-threonyl-[protein] + H2O = L-threonyl-[protein] + phosphate</text>
        <dbReference type="Rhea" id="RHEA:47004"/>
        <dbReference type="Rhea" id="RHEA-COMP:11060"/>
        <dbReference type="Rhea" id="RHEA-COMP:11605"/>
        <dbReference type="ChEBI" id="CHEBI:15377"/>
        <dbReference type="ChEBI" id="CHEBI:30013"/>
        <dbReference type="ChEBI" id="CHEBI:43474"/>
        <dbReference type="ChEBI" id="CHEBI:61977"/>
        <dbReference type="EC" id="3.1.3.16"/>
    </reaction>
</comment>
<comment type="subunit">
    <text evidence="2">Interacts with Pk92B/ASK1.</text>
</comment>
<comment type="subcellular location">
    <subcellularLocation>
        <location evidence="2 3">Mitochondrion outer membrane</location>
        <topology evidence="1">Single-pass membrane protein</topology>
    </subcellularLocation>
</comment>
<comment type="similarity">
    <text evidence="3">Belongs to the phosphoglycerate mutase family. BPG-dependent PGAM subfamily.</text>
</comment>